<dbReference type="EMBL" id="CP000408">
    <property type="protein sequence ID" value="ABP92887.1"/>
    <property type="molecule type" value="Genomic_DNA"/>
</dbReference>
<dbReference type="SMR" id="A4W3E8"/>
<dbReference type="KEGG" id="ssv:SSU98_1729"/>
<dbReference type="HOGENOM" id="CLU_101379_2_1_9"/>
<dbReference type="GO" id="GO:0003677">
    <property type="term" value="F:DNA binding"/>
    <property type="evidence" value="ECO:0007669"/>
    <property type="project" value="UniProtKB-UniRule"/>
</dbReference>
<dbReference type="GO" id="GO:0070063">
    <property type="term" value="F:RNA polymerase binding"/>
    <property type="evidence" value="ECO:0007669"/>
    <property type="project" value="InterPro"/>
</dbReference>
<dbReference type="GO" id="GO:0006354">
    <property type="term" value="P:DNA-templated transcription elongation"/>
    <property type="evidence" value="ECO:0007669"/>
    <property type="project" value="TreeGrafter"/>
</dbReference>
<dbReference type="GO" id="GO:0032784">
    <property type="term" value="P:regulation of DNA-templated transcription elongation"/>
    <property type="evidence" value="ECO:0007669"/>
    <property type="project" value="UniProtKB-UniRule"/>
</dbReference>
<dbReference type="FunFam" id="1.10.287.180:FF:000001">
    <property type="entry name" value="Transcription elongation factor GreA"/>
    <property type="match status" value="1"/>
</dbReference>
<dbReference type="FunFam" id="3.10.50.30:FF:000001">
    <property type="entry name" value="Transcription elongation factor GreA"/>
    <property type="match status" value="1"/>
</dbReference>
<dbReference type="Gene3D" id="3.10.50.30">
    <property type="entry name" value="Transcription elongation factor, GreA/GreB, C-terminal domain"/>
    <property type="match status" value="1"/>
</dbReference>
<dbReference type="Gene3D" id="1.10.287.180">
    <property type="entry name" value="Transcription elongation factor, GreA/GreB, N-terminal domain"/>
    <property type="match status" value="1"/>
</dbReference>
<dbReference type="HAMAP" id="MF_00105">
    <property type="entry name" value="GreA_GreB"/>
    <property type="match status" value="1"/>
</dbReference>
<dbReference type="InterPro" id="IPR036953">
    <property type="entry name" value="GreA/GreB_C_sf"/>
</dbReference>
<dbReference type="InterPro" id="IPR018151">
    <property type="entry name" value="TF_GreA/GreB_CS"/>
</dbReference>
<dbReference type="InterPro" id="IPR006359">
    <property type="entry name" value="Tscrpt_elong_fac_GreA"/>
</dbReference>
<dbReference type="InterPro" id="IPR028624">
    <property type="entry name" value="Tscrpt_elong_fac_GreA/B"/>
</dbReference>
<dbReference type="InterPro" id="IPR001437">
    <property type="entry name" value="Tscrpt_elong_fac_GreA/B_C"/>
</dbReference>
<dbReference type="InterPro" id="IPR023459">
    <property type="entry name" value="Tscrpt_elong_fac_GreA/B_fam"/>
</dbReference>
<dbReference type="InterPro" id="IPR022691">
    <property type="entry name" value="Tscrpt_elong_fac_GreA/B_N"/>
</dbReference>
<dbReference type="InterPro" id="IPR036805">
    <property type="entry name" value="Tscrpt_elong_fac_GreA/B_N_sf"/>
</dbReference>
<dbReference type="NCBIfam" id="TIGR01462">
    <property type="entry name" value="greA"/>
    <property type="match status" value="1"/>
</dbReference>
<dbReference type="NCBIfam" id="NF001260">
    <property type="entry name" value="PRK00226.1-1"/>
    <property type="match status" value="1"/>
</dbReference>
<dbReference type="NCBIfam" id="NF001263">
    <property type="entry name" value="PRK00226.1-4"/>
    <property type="match status" value="1"/>
</dbReference>
<dbReference type="PANTHER" id="PTHR30437">
    <property type="entry name" value="TRANSCRIPTION ELONGATION FACTOR GREA"/>
    <property type="match status" value="1"/>
</dbReference>
<dbReference type="PANTHER" id="PTHR30437:SF4">
    <property type="entry name" value="TRANSCRIPTION ELONGATION FACTOR GREA"/>
    <property type="match status" value="1"/>
</dbReference>
<dbReference type="Pfam" id="PF01272">
    <property type="entry name" value="GreA_GreB"/>
    <property type="match status" value="1"/>
</dbReference>
<dbReference type="Pfam" id="PF03449">
    <property type="entry name" value="GreA_GreB_N"/>
    <property type="match status" value="1"/>
</dbReference>
<dbReference type="PIRSF" id="PIRSF006092">
    <property type="entry name" value="GreA_GreB"/>
    <property type="match status" value="1"/>
</dbReference>
<dbReference type="SUPFAM" id="SSF54534">
    <property type="entry name" value="FKBP-like"/>
    <property type="match status" value="1"/>
</dbReference>
<dbReference type="SUPFAM" id="SSF46557">
    <property type="entry name" value="GreA transcript cleavage protein, N-terminal domain"/>
    <property type="match status" value="1"/>
</dbReference>
<dbReference type="PROSITE" id="PS00829">
    <property type="entry name" value="GREAB_1"/>
    <property type="match status" value="1"/>
</dbReference>
<dbReference type="PROSITE" id="PS00830">
    <property type="entry name" value="GREAB_2"/>
    <property type="match status" value="1"/>
</dbReference>
<feature type="chain" id="PRO_1000034310" description="Transcription elongation factor GreA">
    <location>
        <begin position="1"/>
        <end position="160"/>
    </location>
</feature>
<feature type="coiled-coil region" evidence="1">
    <location>
        <begin position="1"/>
        <end position="31"/>
    </location>
</feature>
<comment type="function">
    <text evidence="1">Necessary for efficient RNA polymerase transcription elongation past template-encoded arresting sites. The arresting sites in DNA have the property of trapping a certain fraction of elongating RNA polymerases that pass through, resulting in locked ternary complexes. Cleavage of the nascent transcript by cleavage factors such as GreA or GreB allows the resumption of elongation from the new 3'terminus. GreA releases sequences of 2 to 3 nucleotides.</text>
</comment>
<comment type="similarity">
    <text evidence="1">Belongs to the GreA/GreB family.</text>
</comment>
<accession>A4W3E8</accession>
<keyword id="KW-0175">Coiled coil</keyword>
<keyword id="KW-0238">DNA-binding</keyword>
<keyword id="KW-0804">Transcription</keyword>
<keyword id="KW-0805">Transcription regulation</keyword>
<reference key="1">
    <citation type="journal article" date="2007" name="PLoS ONE">
        <title>A glimpse of streptococcal toxic shock syndrome from comparative genomics of S. suis 2 Chinese isolates.</title>
        <authorList>
            <person name="Chen C."/>
            <person name="Tang J."/>
            <person name="Dong W."/>
            <person name="Wang C."/>
            <person name="Feng Y."/>
            <person name="Wang J."/>
            <person name="Zheng F."/>
            <person name="Pan X."/>
            <person name="Liu D."/>
            <person name="Li M."/>
            <person name="Song Y."/>
            <person name="Zhu X."/>
            <person name="Sun H."/>
            <person name="Feng T."/>
            <person name="Guo Z."/>
            <person name="Ju A."/>
            <person name="Ge J."/>
            <person name="Dong Y."/>
            <person name="Sun W."/>
            <person name="Jiang Y."/>
            <person name="Wang J."/>
            <person name="Yan J."/>
            <person name="Yang H."/>
            <person name="Wang X."/>
            <person name="Gao G.F."/>
            <person name="Yang R."/>
            <person name="Wang J."/>
            <person name="Yu J."/>
        </authorList>
    </citation>
    <scope>NUCLEOTIDE SEQUENCE [LARGE SCALE GENOMIC DNA]</scope>
    <source>
        <strain>98HAH33</strain>
    </source>
</reference>
<gene>
    <name evidence="1" type="primary">greA</name>
    <name type="ordered locus">SSU98_1729</name>
</gene>
<proteinExistence type="inferred from homology"/>
<sequence length="160" mass="17616">MAEKTYPMTLEEKEKLEKELEELKLVRRPEIVERIKIARSYGDLSENSEYEAAKDEQAFVEGQISTIETKIRYAEIVNSDAVAADEVAIGKTVTVQEVGETEEEVYHIVGAAGADVFANKISNESPIGHALIGKKTGDVATIETPAGSYDVKILKVEKTK</sequence>
<organism>
    <name type="scientific">Streptococcus suis (strain 98HAH33)</name>
    <dbReference type="NCBI Taxonomy" id="391296"/>
    <lineage>
        <taxon>Bacteria</taxon>
        <taxon>Bacillati</taxon>
        <taxon>Bacillota</taxon>
        <taxon>Bacilli</taxon>
        <taxon>Lactobacillales</taxon>
        <taxon>Streptococcaceae</taxon>
        <taxon>Streptococcus</taxon>
    </lineage>
</organism>
<name>GREA_STRS2</name>
<protein>
    <recommendedName>
        <fullName evidence="1">Transcription elongation factor GreA</fullName>
    </recommendedName>
    <alternativeName>
        <fullName evidence="1">Transcript cleavage factor GreA</fullName>
    </alternativeName>
</protein>
<evidence type="ECO:0000255" key="1">
    <source>
        <dbReference type="HAMAP-Rule" id="MF_00105"/>
    </source>
</evidence>